<evidence type="ECO:0000250" key="1"/>
<evidence type="ECO:0000255" key="2">
    <source>
        <dbReference type="PROSITE-ProRule" id="PRU00088"/>
    </source>
</evidence>
<evidence type="ECO:0000305" key="3"/>
<comment type="function">
    <text evidence="1">Low-potential electron donor to a number of redox enzymes.</text>
</comment>
<comment type="cofactor">
    <cofactor evidence="1">
        <name>FMN</name>
        <dbReference type="ChEBI" id="CHEBI:58210"/>
    </cofactor>
</comment>
<comment type="similarity">
    <text evidence="3">Belongs to the flavodoxin family.</text>
</comment>
<organism>
    <name type="scientific">Buchnera aphidicola subsp. Acyrthosiphon pisum (strain APS)</name>
    <name type="common">Acyrthosiphon pisum symbiotic bacterium</name>
    <dbReference type="NCBI Taxonomy" id="107806"/>
    <lineage>
        <taxon>Bacteria</taxon>
        <taxon>Pseudomonadati</taxon>
        <taxon>Pseudomonadota</taxon>
        <taxon>Gammaproteobacteria</taxon>
        <taxon>Enterobacterales</taxon>
        <taxon>Erwiniaceae</taxon>
        <taxon>Buchnera</taxon>
    </lineage>
</organism>
<keyword id="KW-0249">Electron transport</keyword>
<keyword id="KW-0285">Flavoprotein</keyword>
<keyword id="KW-0288">FMN</keyword>
<keyword id="KW-1185">Reference proteome</keyword>
<keyword id="KW-0813">Transport</keyword>
<protein>
    <recommendedName>
        <fullName>Flavodoxin</fullName>
    </recommendedName>
</protein>
<sequence length="171" mass="20090">MKKIGIFFGSDTGNTEKIAKLIQKYIGDNVSCLYDISNTSQKDIEDFNFLIFGVPTWYYGEVQCDWDDFLPTLKKINFSNKIVALFGCGDQEDYSEYFCDAIGTIYDILKKNKANIIGKWSTEDYYFEQSKALLNKKYFYGLILDEDRQANKTEYRIKQWVKQIIPYFNTH</sequence>
<dbReference type="EMBL" id="BA000003">
    <property type="protein sequence ID" value="BAB13008.1"/>
    <property type="molecule type" value="Genomic_DNA"/>
</dbReference>
<dbReference type="RefSeq" id="NP_240122.1">
    <property type="nucleotide sequence ID" value="NC_002528.1"/>
</dbReference>
<dbReference type="RefSeq" id="WP_009874252.1">
    <property type="nucleotide sequence ID" value="NZ_AP036055.1"/>
</dbReference>
<dbReference type="SMR" id="P57385"/>
<dbReference type="STRING" id="563178.BUAP5A_293"/>
<dbReference type="EnsemblBacteria" id="BAB13008">
    <property type="protein sequence ID" value="BAB13008"/>
    <property type="gene ID" value="BAB13008"/>
</dbReference>
<dbReference type="KEGG" id="buc:BU299"/>
<dbReference type="PATRIC" id="fig|107806.10.peg.310"/>
<dbReference type="eggNOG" id="COG0716">
    <property type="taxonomic scope" value="Bacteria"/>
</dbReference>
<dbReference type="HOGENOM" id="CLU_051402_1_0_6"/>
<dbReference type="Proteomes" id="UP000001806">
    <property type="component" value="Chromosome"/>
</dbReference>
<dbReference type="GO" id="GO:0009055">
    <property type="term" value="F:electron transfer activity"/>
    <property type="evidence" value="ECO:0007669"/>
    <property type="project" value="InterPro"/>
</dbReference>
<dbReference type="GO" id="GO:0010181">
    <property type="term" value="F:FMN binding"/>
    <property type="evidence" value="ECO:0007669"/>
    <property type="project" value="InterPro"/>
</dbReference>
<dbReference type="Gene3D" id="3.40.50.360">
    <property type="match status" value="1"/>
</dbReference>
<dbReference type="InterPro" id="IPR050619">
    <property type="entry name" value="Flavodoxin"/>
</dbReference>
<dbReference type="InterPro" id="IPR008254">
    <property type="entry name" value="Flavodoxin/NO_synth"/>
</dbReference>
<dbReference type="InterPro" id="IPR001226">
    <property type="entry name" value="Flavodoxin_CS"/>
</dbReference>
<dbReference type="InterPro" id="IPR010086">
    <property type="entry name" value="Flavodoxin_lc"/>
</dbReference>
<dbReference type="InterPro" id="IPR029039">
    <property type="entry name" value="Flavoprotein-like_sf"/>
</dbReference>
<dbReference type="NCBIfam" id="TIGR01752">
    <property type="entry name" value="flav_long"/>
    <property type="match status" value="1"/>
</dbReference>
<dbReference type="NCBIfam" id="NF006737">
    <property type="entry name" value="PRK09267.1-3"/>
    <property type="match status" value="1"/>
</dbReference>
<dbReference type="NCBIfam" id="NF006739">
    <property type="entry name" value="PRK09267.1-5"/>
    <property type="match status" value="1"/>
</dbReference>
<dbReference type="PANTHER" id="PTHR42809:SF1">
    <property type="entry name" value="FLAVODOXIN 1"/>
    <property type="match status" value="1"/>
</dbReference>
<dbReference type="PANTHER" id="PTHR42809">
    <property type="entry name" value="FLAVODOXIN 2"/>
    <property type="match status" value="1"/>
</dbReference>
<dbReference type="Pfam" id="PF00258">
    <property type="entry name" value="Flavodoxin_1"/>
    <property type="match status" value="1"/>
</dbReference>
<dbReference type="PIRSF" id="PIRSF038996">
    <property type="entry name" value="FldA"/>
    <property type="match status" value="1"/>
</dbReference>
<dbReference type="SUPFAM" id="SSF52218">
    <property type="entry name" value="Flavoproteins"/>
    <property type="match status" value="1"/>
</dbReference>
<dbReference type="PROSITE" id="PS00201">
    <property type="entry name" value="FLAVODOXIN"/>
    <property type="match status" value="1"/>
</dbReference>
<dbReference type="PROSITE" id="PS50902">
    <property type="entry name" value="FLAVODOXIN_LIKE"/>
    <property type="match status" value="1"/>
</dbReference>
<feature type="chain" id="PRO_0000171609" description="Flavodoxin">
    <location>
        <begin position="1"/>
        <end position="171"/>
    </location>
</feature>
<feature type="domain" description="Flavodoxin-like" evidence="2">
    <location>
        <begin position="4"/>
        <end position="165"/>
    </location>
</feature>
<gene>
    <name type="primary">fldA</name>
    <name type="ordered locus">BU299</name>
</gene>
<reference key="1">
    <citation type="journal article" date="2000" name="Nature">
        <title>Genome sequence of the endocellular bacterial symbiont of aphids Buchnera sp. APS.</title>
        <authorList>
            <person name="Shigenobu S."/>
            <person name="Watanabe H."/>
            <person name="Hattori M."/>
            <person name="Sakaki Y."/>
            <person name="Ishikawa H."/>
        </authorList>
    </citation>
    <scope>NUCLEOTIDE SEQUENCE [LARGE SCALE GENOMIC DNA]</scope>
    <source>
        <strain>APS</strain>
    </source>
</reference>
<name>FLAV_BUCAI</name>
<accession>P57385</accession>
<proteinExistence type="inferred from homology"/>